<comment type="function">
    <text evidence="4 5 6 7 8">Serine/threonine-protein kinase, which phosphorylates mlk-1. Involved in the stress response to heavy metals by activating the mlk-1/mek-1/kgb-1 pathway (PubMed:20008556). In ventral cord commissural motoneurons, required for dorsal axon guidance downstream of unc-6/netrin repulsion receptor unc-5 and probably of Rho GTPases ced-10 and mig-2. Plays a redundant role with mig-10 in orientating axonal growth of HSN neurons (PubMed:18499456). Plays a redundant role with pak-1 in P neuroblast migration and in distal tip cell (DTC)-mediated guidance of gonad elongation probably downstream of Rho GTPases (PubMed:17050621, PubMed:19023419, PubMed:23390595). In association with pak-2, plays a role in embryogenesis. In association with pak-1, may be involved in spermatogenesis (PubMed:23390595).</text>
</comment>
<comment type="catalytic activity">
    <reaction evidence="7">
        <text>L-seryl-[protein] + ATP = O-phospho-L-seryl-[protein] + ADP + H(+)</text>
        <dbReference type="Rhea" id="RHEA:17989"/>
        <dbReference type="Rhea" id="RHEA-COMP:9863"/>
        <dbReference type="Rhea" id="RHEA-COMP:11604"/>
        <dbReference type="ChEBI" id="CHEBI:15378"/>
        <dbReference type="ChEBI" id="CHEBI:29999"/>
        <dbReference type="ChEBI" id="CHEBI:30616"/>
        <dbReference type="ChEBI" id="CHEBI:83421"/>
        <dbReference type="ChEBI" id="CHEBI:456216"/>
        <dbReference type="EC" id="2.7.11.1"/>
    </reaction>
</comment>
<comment type="catalytic activity">
    <reaction evidence="7">
        <text>L-threonyl-[protein] + ATP = O-phospho-L-threonyl-[protein] + ADP + H(+)</text>
        <dbReference type="Rhea" id="RHEA:46608"/>
        <dbReference type="Rhea" id="RHEA-COMP:11060"/>
        <dbReference type="Rhea" id="RHEA-COMP:11605"/>
        <dbReference type="ChEBI" id="CHEBI:15378"/>
        <dbReference type="ChEBI" id="CHEBI:30013"/>
        <dbReference type="ChEBI" id="CHEBI:30616"/>
        <dbReference type="ChEBI" id="CHEBI:61977"/>
        <dbReference type="ChEBI" id="CHEBI:456216"/>
        <dbReference type="EC" id="2.7.11.1"/>
    </reaction>
</comment>
<comment type="cofactor">
    <cofactor evidence="7">
        <name>Mg(2+)</name>
        <dbReference type="ChEBI" id="CHEBI:18420"/>
    </cofactor>
</comment>
<comment type="subunit">
    <text evidence="7">Interacts with mlk-1; the interaction is independent of max-2 and mlk-1 kinase activities. Interacts with mig-2 (GTP-bound form).</text>
</comment>
<comment type="subcellular location">
    <subcellularLocation>
        <location evidence="4">Perikaryon</location>
    </subcellularLocation>
    <subcellularLocation>
        <location evidence="4">Cell projection</location>
        <location evidence="4">Dendrite</location>
    </subcellularLocation>
    <subcellularLocation>
        <location evidence="6">Cytoplasm</location>
    </subcellularLocation>
</comment>
<comment type="alternative products">
    <event type="alternative splicing"/>
    <isoform>
        <id>G5EGQ3-1</id>
        <name evidence="15">c</name>
        <sequence type="displayed"/>
    </isoform>
    <isoform>
        <id>G5EGQ3-2</id>
        <name evidence="13">a</name>
        <sequence type="described" ref="VSP_057795"/>
    </isoform>
    <isoform>
        <id>G5EGQ3-3</id>
        <name evidence="14">b</name>
        <sequence type="described" ref="VSP_057794"/>
    </isoform>
    <isoform>
        <id>G5EGQ3-4</id>
        <name evidence="16">d</name>
        <sequence type="described" ref="VSP_057793"/>
    </isoform>
</comment>
<comment type="developmental stage">
    <text evidence="4">Expressed ubiquitously in early embryo. At the comma stage and at later embryonic stages expression is mainly restricted to the anterior region of the embryo and to the ventral cord. At the 1.5-fold embryonic stage, expression starts in pharynx and in several head and tail neurons and is maintained in adults. During L1 larval stage, expressed in ALM and PLM neurons and later in PVD and AVM neurons.</text>
</comment>
<comment type="disruption phenotype">
    <text evidence="4 7 8">Isoforms a and c: Partial sensitivity to the heavy metal Cu(2+), which is characterized by a failure of larvae to reach adulthood. Partial reduction in basal kgb-1 phosphorylation and after Cu(2+) treatment (PubMed:20008556). Several DD and DC motoneuron axons fail to reach the dorsal cord. RNAi-mediated knockdown causes a similar phenotype but less severe. In max-2 and pak-1 double mutants, defect in axonal guidance is more severe. Animals are also uncoordinated, defective in egg laying and in distal tip cell (DTC) migration, morphology and guidance, and exhibit ventral enclosure defects (PubMed:17050621). A more severe phenotype has been reported where double mutant animals have embryonic morphogenesis defects resulting in lethality. The few surviving adults are sterile and often have truncated gonads which, in some cases, lack sperm. RNAi-mediated knockdown rescues embryonic lethality of pak-1 and pak-2 double mutants (PubMed:23390595).</text>
</comment>
<comment type="similarity">
    <text evidence="9">Belongs to the protein kinase superfamily. STE Ser/Thr protein kinase family. STE20 subfamily.</text>
</comment>
<name>MAX2_CAEEL</name>
<protein>
    <recommendedName>
        <fullName evidence="9">Serine/threonine-protein kinase max-2</fullName>
        <ecNumber evidence="7">2.7.11.1</ecNumber>
    </recommendedName>
    <alternativeName>
        <fullName evidence="15">Motor axon guidance protein 2</fullName>
    </alternativeName>
    <alternativeName>
        <fullName evidence="10">p21-activated kinase</fullName>
    </alternativeName>
</protein>
<dbReference type="EC" id="2.7.11.1" evidence="7"/>
<dbReference type="EMBL" id="DQ523832">
    <property type="protein sequence ID" value="ABF71877.1"/>
    <property type="molecule type" value="mRNA"/>
</dbReference>
<dbReference type="EMBL" id="BX284602">
    <property type="protein sequence ID" value="CAA21637.2"/>
    <property type="molecule type" value="Genomic_DNA"/>
</dbReference>
<dbReference type="EMBL" id="BX284602">
    <property type="protein sequence ID" value="CAL49443.1"/>
    <property type="molecule type" value="Genomic_DNA"/>
</dbReference>
<dbReference type="EMBL" id="BX284602">
    <property type="protein sequence ID" value="CAQ35064.1"/>
    <property type="molecule type" value="Genomic_DNA"/>
</dbReference>
<dbReference type="EMBL" id="BX284602">
    <property type="protein sequence ID" value="CCE71454.1"/>
    <property type="molecule type" value="Genomic_DNA"/>
</dbReference>
<dbReference type="PIR" id="T26684">
    <property type="entry name" value="T26684"/>
</dbReference>
<dbReference type="RefSeq" id="NP_001076635.1">
    <molecule id="G5EGQ3-2"/>
    <property type="nucleotide sequence ID" value="NM_001083166.5"/>
</dbReference>
<dbReference type="RefSeq" id="NP_001076636.1">
    <molecule id="G5EGQ3-3"/>
    <property type="nucleotide sequence ID" value="NM_001083167.2"/>
</dbReference>
<dbReference type="RefSeq" id="NP_001122655.1">
    <molecule id="G5EGQ3-1"/>
    <property type="nucleotide sequence ID" value="NM_001129183.4"/>
</dbReference>
<dbReference type="RefSeq" id="NP_001254363.1">
    <molecule id="G5EGQ3-4"/>
    <property type="nucleotide sequence ID" value="NM_001267434.3"/>
</dbReference>
<dbReference type="SMR" id="G5EGQ3"/>
<dbReference type="FunCoup" id="G5EGQ3">
    <property type="interactions" value="294"/>
</dbReference>
<dbReference type="STRING" id="6239.Y38F1A.10e.1"/>
<dbReference type="PaxDb" id="6239-Y38F1A.10c"/>
<dbReference type="PeptideAtlas" id="G5EGQ3"/>
<dbReference type="EnsemblMetazoa" id="Y38F1A.10a.1">
    <molecule id="G5EGQ3-2"/>
    <property type="protein sequence ID" value="Y38F1A.10a.1"/>
    <property type="gene ID" value="WBGene00003144"/>
</dbReference>
<dbReference type="EnsemblMetazoa" id="Y38F1A.10b.1">
    <molecule id="G5EGQ3-3"/>
    <property type="protein sequence ID" value="Y38F1A.10b.1"/>
    <property type="gene ID" value="WBGene00003144"/>
</dbReference>
<dbReference type="EnsemblMetazoa" id="Y38F1A.10c.1">
    <molecule id="G5EGQ3-1"/>
    <property type="protein sequence ID" value="Y38F1A.10c.1"/>
    <property type="gene ID" value="WBGene00003144"/>
</dbReference>
<dbReference type="EnsemblMetazoa" id="Y38F1A.10d.1">
    <molecule id="G5EGQ3-4"/>
    <property type="protein sequence ID" value="Y38F1A.10d.1"/>
    <property type="gene ID" value="WBGene00003144"/>
</dbReference>
<dbReference type="GeneID" id="3565400"/>
<dbReference type="KEGG" id="cel:CELE_Y38F1A.10"/>
<dbReference type="UCSC" id="Y38F1A.10a">
    <property type="organism name" value="c. elegans"/>
</dbReference>
<dbReference type="AGR" id="WB:WBGene00003144"/>
<dbReference type="CTD" id="3565400"/>
<dbReference type="WormBase" id="Y38F1A.10a">
    <molecule id="G5EGQ3-2"/>
    <property type="protein sequence ID" value="CE40478"/>
    <property type="gene ID" value="WBGene00003144"/>
    <property type="gene designation" value="max-2"/>
</dbReference>
<dbReference type="WormBase" id="Y38F1A.10b">
    <molecule id="G5EGQ3-3"/>
    <property type="protein sequence ID" value="CE35656"/>
    <property type="gene ID" value="WBGene00003144"/>
    <property type="gene designation" value="max-2"/>
</dbReference>
<dbReference type="WormBase" id="Y38F1A.10c">
    <molecule id="G5EGQ3-1"/>
    <property type="protein sequence ID" value="CE42477"/>
    <property type="gene ID" value="WBGene00003144"/>
    <property type="gene designation" value="max-2"/>
</dbReference>
<dbReference type="WormBase" id="Y38F1A.10d">
    <molecule id="G5EGQ3-4"/>
    <property type="protein sequence ID" value="CE46596"/>
    <property type="gene ID" value="WBGene00003144"/>
    <property type="gene designation" value="max-2"/>
</dbReference>
<dbReference type="eggNOG" id="KOG0578">
    <property type="taxonomic scope" value="Eukaryota"/>
</dbReference>
<dbReference type="HOGENOM" id="CLU_000288_26_2_1"/>
<dbReference type="InParanoid" id="G5EGQ3"/>
<dbReference type="OMA" id="TNFFHEV"/>
<dbReference type="OrthoDB" id="1022360at2759"/>
<dbReference type="Reactome" id="R-CEL-389359">
    <property type="pathway name" value="CD28 dependent Vav1 pathway"/>
</dbReference>
<dbReference type="Reactome" id="R-CEL-3928664">
    <property type="pathway name" value="Ephrin signaling"/>
</dbReference>
<dbReference type="Reactome" id="R-CEL-399954">
    <property type="pathway name" value="Sema3A PAK dependent Axon repulsion"/>
</dbReference>
<dbReference type="Reactome" id="R-CEL-4420097">
    <property type="pathway name" value="VEGFA-VEGFR2 Pathway"/>
</dbReference>
<dbReference type="Reactome" id="R-CEL-5218920">
    <property type="pathway name" value="VEGFR2 mediated vascular permeability"/>
</dbReference>
<dbReference type="Reactome" id="R-CEL-5621575">
    <property type="pathway name" value="CD209 (DC-SIGN) signaling"/>
</dbReference>
<dbReference type="Reactome" id="R-CEL-5627123">
    <property type="pathway name" value="RHO GTPases activate PAKs"/>
</dbReference>
<dbReference type="Reactome" id="R-CEL-5687128">
    <property type="pathway name" value="MAPK6/MAPK4 signaling"/>
</dbReference>
<dbReference type="Reactome" id="R-CEL-9013149">
    <property type="pathway name" value="RAC1 GTPase cycle"/>
</dbReference>
<dbReference type="Reactome" id="R-CEL-9013404">
    <property type="pathway name" value="RAC2 GTPase cycle"/>
</dbReference>
<dbReference type="Reactome" id="R-CEL-9013406">
    <property type="pathway name" value="RHOQ GTPase cycle"/>
</dbReference>
<dbReference type="Reactome" id="R-CEL-9013407">
    <property type="pathway name" value="RHOH GTPase cycle"/>
</dbReference>
<dbReference type="Reactome" id="R-CEL-9013408">
    <property type="pathway name" value="RHOG GTPase cycle"/>
</dbReference>
<dbReference type="Reactome" id="R-CEL-9013420">
    <property type="pathway name" value="RHOU GTPase cycle"/>
</dbReference>
<dbReference type="Reactome" id="R-CEL-9013423">
    <property type="pathway name" value="RAC3 GTPase cycle"/>
</dbReference>
<dbReference type="Reactome" id="R-CEL-9013424">
    <property type="pathway name" value="RHOV GTPase cycle"/>
</dbReference>
<dbReference type="SignaLink" id="G5EGQ3"/>
<dbReference type="PRO" id="PR:G5EGQ3"/>
<dbReference type="Proteomes" id="UP000001940">
    <property type="component" value="Chromosome II"/>
</dbReference>
<dbReference type="Bgee" id="WBGene00003144">
    <property type="expression patterns" value="Expressed in pharyngeal muscle cell (C elegans) and 4 other cell types or tissues"/>
</dbReference>
<dbReference type="ExpressionAtlas" id="G5EGQ3">
    <property type="expression patterns" value="baseline and differential"/>
</dbReference>
<dbReference type="GO" id="GO:0005737">
    <property type="term" value="C:cytoplasm"/>
    <property type="evidence" value="ECO:0000318"/>
    <property type="project" value="GO_Central"/>
</dbReference>
<dbReference type="GO" id="GO:0030425">
    <property type="term" value="C:dendrite"/>
    <property type="evidence" value="ECO:0007669"/>
    <property type="project" value="UniProtKB-SubCell"/>
</dbReference>
<dbReference type="GO" id="GO:0043204">
    <property type="term" value="C:perikaryon"/>
    <property type="evidence" value="ECO:0007669"/>
    <property type="project" value="UniProtKB-SubCell"/>
</dbReference>
<dbReference type="GO" id="GO:0005524">
    <property type="term" value="F:ATP binding"/>
    <property type="evidence" value="ECO:0007669"/>
    <property type="project" value="UniProtKB-KW"/>
</dbReference>
<dbReference type="GO" id="GO:0046872">
    <property type="term" value="F:metal ion binding"/>
    <property type="evidence" value="ECO:0007669"/>
    <property type="project" value="UniProtKB-KW"/>
</dbReference>
<dbReference type="GO" id="GO:0031435">
    <property type="term" value="F:mitogen-activated protein kinase kinase kinase binding"/>
    <property type="evidence" value="ECO:0000353"/>
    <property type="project" value="WormBase"/>
</dbReference>
<dbReference type="GO" id="GO:0106310">
    <property type="term" value="F:protein serine kinase activity"/>
    <property type="evidence" value="ECO:0007669"/>
    <property type="project" value="RHEA"/>
</dbReference>
<dbReference type="GO" id="GO:0004674">
    <property type="term" value="F:protein serine/threonine kinase activity"/>
    <property type="evidence" value="ECO:0000314"/>
    <property type="project" value="WormBase"/>
</dbReference>
<dbReference type="GO" id="GO:0031267">
    <property type="term" value="F:small GTPase binding"/>
    <property type="evidence" value="ECO:0000353"/>
    <property type="project" value="WormBase"/>
</dbReference>
<dbReference type="GO" id="GO:0016477">
    <property type="term" value="P:cell migration"/>
    <property type="evidence" value="ECO:0000316"/>
    <property type="project" value="UniProtKB"/>
</dbReference>
<dbReference type="GO" id="GO:0009267">
    <property type="term" value="P:cellular response to starvation"/>
    <property type="evidence" value="ECO:0000318"/>
    <property type="project" value="GO_Central"/>
</dbReference>
<dbReference type="GO" id="GO:0035262">
    <property type="term" value="P:gonad morphogenesis"/>
    <property type="evidence" value="ECO:0000315"/>
    <property type="project" value="WormBase"/>
</dbReference>
<dbReference type="GO" id="GO:0007506">
    <property type="term" value="P:gonadal mesoderm development"/>
    <property type="evidence" value="ECO:0007669"/>
    <property type="project" value="UniProtKB-KW"/>
</dbReference>
<dbReference type="GO" id="GO:0040039">
    <property type="term" value="P:inductive cell migration"/>
    <property type="evidence" value="ECO:0000316"/>
    <property type="project" value="WormBase"/>
</dbReference>
<dbReference type="GO" id="GO:0035556">
    <property type="term" value="P:intracellular signal transduction"/>
    <property type="evidence" value="ECO:0000318"/>
    <property type="project" value="GO_Central"/>
</dbReference>
<dbReference type="GO" id="GO:0007254">
    <property type="term" value="P:JNK cascade"/>
    <property type="evidence" value="ECO:0000316"/>
    <property type="project" value="WormBase"/>
</dbReference>
<dbReference type="GO" id="GO:0008045">
    <property type="term" value="P:motor neuron axon guidance"/>
    <property type="evidence" value="ECO:0000315"/>
    <property type="project" value="UniProtKB"/>
</dbReference>
<dbReference type="GO" id="GO:0038007">
    <property type="term" value="P:netrin-activated signaling pathway"/>
    <property type="evidence" value="ECO:0000316"/>
    <property type="project" value="UniProtKB"/>
</dbReference>
<dbReference type="GO" id="GO:0050770">
    <property type="term" value="P:regulation of axonogenesis"/>
    <property type="evidence" value="ECO:0000318"/>
    <property type="project" value="GO_Central"/>
</dbReference>
<dbReference type="GO" id="GO:0043408">
    <property type="term" value="P:regulation of MAPK cascade"/>
    <property type="evidence" value="ECO:0000318"/>
    <property type="project" value="GO_Central"/>
</dbReference>
<dbReference type="GO" id="GO:0046688">
    <property type="term" value="P:response to copper ion"/>
    <property type="evidence" value="ECO:0000315"/>
    <property type="project" value="WormBase"/>
</dbReference>
<dbReference type="CDD" id="cd06614">
    <property type="entry name" value="STKc_PAK"/>
    <property type="match status" value="1"/>
</dbReference>
<dbReference type="FunFam" id="1.10.510.10:FF:000768">
    <property type="entry name" value="Non-specific serine/threonine protein kinase"/>
    <property type="match status" value="1"/>
</dbReference>
<dbReference type="FunFam" id="3.30.200.20:FF:000759">
    <property type="entry name" value="Non-specific serine/threonine protein kinase"/>
    <property type="match status" value="1"/>
</dbReference>
<dbReference type="Gene3D" id="3.90.810.10">
    <property type="entry name" value="CRIB domain"/>
    <property type="match status" value="1"/>
</dbReference>
<dbReference type="Gene3D" id="3.30.200.20">
    <property type="entry name" value="Phosphorylase Kinase, domain 1"/>
    <property type="match status" value="1"/>
</dbReference>
<dbReference type="Gene3D" id="1.10.510.10">
    <property type="entry name" value="Transferase(Phosphotransferase) domain 1"/>
    <property type="match status" value="1"/>
</dbReference>
<dbReference type="InterPro" id="IPR000095">
    <property type="entry name" value="CRIB_dom"/>
</dbReference>
<dbReference type="InterPro" id="IPR036936">
    <property type="entry name" value="CRIB_dom_sf"/>
</dbReference>
<dbReference type="InterPro" id="IPR011009">
    <property type="entry name" value="Kinase-like_dom_sf"/>
</dbReference>
<dbReference type="InterPro" id="IPR051931">
    <property type="entry name" value="PAK3-like"/>
</dbReference>
<dbReference type="InterPro" id="IPR000719">
    <property type="entry name" value="Prot_kinase_dom"/>
</dbReference>
<dbReference type="InterPro" id="IPR017441">
    <property type="entry name" value="Protein_kinase_ATP_BS"/>
</dbReference>
<dbReference type="InterPro" id="IPR008271">
    <property type="entry name" value="Ser/Thr_kinase_AS"/>
</dbReference>
<dbReference type="PANTHER" id="PTHR45832">
    <property type="entry name" value="SERINE/THREONINE-PROTEIN KINASE SAMKA-RELATED-RELATED"/>
    <property type="match status" value="1"/>
</dbReference>
<dbReference type="PANTHER" id="PTHR45832:SF22">
    <property type="entry name" value="SERINE_THREONINE-PROTEIN KINASE SAMKA-RELATED"/>
    <property type="match status" value="1"/>
</dbReference>
<dbReference type="Pfam" id="PF00786">
    <property type="entry name" value="PBD"/>
    <property type="match status" value="1"/>
</dbReference>
<dbReference type="Pfam" id="PF00069">
    <property type="entry name" value="Pkinase"/>
    <property type="match status" value="1"/>
</dbReference>
<dbReference type="SMART" id="SM00285">
    <property type="entry name" value="PBD"/>
    <property type="match status" value="1"/>
</dbReference>
<dbReference type="SMART" id="SM00220">
    <property type="entry name" value="S_TKc"/>
    <property type="match status" value="1"/>
</dbReference>
<dbReference type="SUPFAM" id="SSF56112">
    <property type="entry name" value="Protein kinase-like (PK-like)"/>
    <property type="match status" value="1"/>
</dbReference>
<dbReference type="PROSITE" id="PS50108">
    <property type="entry name" value="CRIB"/>
    <property type="match status" value="1"/>
</dbReference>
<dbReference type="PROSITE" id="PS00107">
    <property type="entry name" value="PROTEIN_KINASE_ATP"/>
    <property type="match status" value="1"/>
</dbReference>
<dbReference type="PROSITE" id="PS50011">
    <property type="entry name" value="PROTEIN_KINASE_DOM"/>
    <property type="match status" value="1"/>
</dbReference>
<dbReference type="PROSITE" id="PS00108">
    <property type="entry name" value="PROTEIN_KINASE_ST"/>
    <property type="match status" value="1"/>
</dbReference>
<gene>
    <name evidence="15" type="primary">max-2</name>
    <name evidence="15" type="ORF">Y38F1A.10</name>
</gene>
<evidence type="ECO:0000255" key="1">
    <source>
        <dbReference type="PROSITE-ProRule" id="PRU00057"/>
    </source>
</evidence>
<evidence type="ECO:0000255" key="2">
    <source>
        <dbReference type="PROSITE-ProRule" id="PRU00159"/>
    </source>
</evidence>
<evidence type="ECO:0000256" key="3">
    <source>
        <dbReference type="SAM" id="MobiDB-lite"/>
    </source>
</evidence>
<evidence type="ECO:0000269" key="4">
    <source>
    </source>
</evidence>
<evidence type="ECO:0000269" key="5">
    <source>
    </source>
</evidence>
<evidence type="ECO:0000269" key="6">
    <source>
    </source>
</evidence>
<evidence type="ECO:0000269" key="7">
    <source>
    </source>
</evidence>
<evidence type="ECO:0000269" key="8">
    <source>
    </source>
</evidence>
<evidence type="ECO:0000305" key="9"/>
<evidence type="ECO:0000305" key="10">
    <source>
    </source>
</evidence>
<evidence type="ECO:0000312" key="11">
    <source>
        <dbReference type="EMBL" id="ABF71877.1"/>
    </source>
</evidence>
<evidence type="ECO:0000312" key="12">
    <source>
        <dbReference type="Proteomes" id="UP000001940"/>
    </source>
</evidence>
<evidence type="ECO:0000312" key="13">
    <source>
        <dbReference type="WormBase" id="Y38F1A.10a"/>
    </source>
</evidence>
<evidence type="ECO:0000312" key="14">
    <source>
        <dbReference type="WormBase" id="Y38F1A.10b"/>
    </source>
</evidence>
<evidence type="ECO:0000312" key="15">
    <source>
        <dbReference type="WormBase" id="Y38F1A.10c"/>
    </source>
</evidence>
<evidence type="ECO:0000312" key="16">
    <source>
        <dbReference type="WormBase" id="Y38F1A.10d"/>
    </source>
</evidence>
<feature type="chain" id="PRO_0000433491" description="Serine/threonine-protein kinase max-2" evidence="9">
    <location>
        <begin position="1"/>
        <end position="646"/>
    </location>
</feature>
<feature type="domain" description="CRIB" evidence="1">
    <location>
        <begin position="41"/>
        <end position="54"/>
    </location>
</feature>
<feature type="domain" description="Protein kinase" evidence="2">
    <location>
        <begin position="376"/>
        <end position="627"/>
    </location>
</feature>
<feature type="region of interest" description="Disordered" evidence="3">
    <location>
        <begin position="19"/>
        <end position="40"/>
    </location>
</feature>
<feature type="region of interest" description="Disordered" evidence="3">
    <location>
        <begin position="136"/>
        <end position="345"/>
    </location>
</feature>
<feature type="compositionally biased region" description="Basic and acidic residues" evidence="3">
    <location>
        <begin position="22"/>
        <end position="33"/>
    </location>
</feature>
<feature type="compositionally biased region" description="Low complexity" evidence="3">
    <location>
        <begin position="142"/>
        <end position="157"/>
    </location>
</feature>
<feature type="compositionally biased region" description="Low complexity" evidence="3">
    <location>
        <begin position="167"/>
        <end position="180"/>
    </location>
</feature>
<feature type="compositionally biased region" description="Polar residues" evidence="3">
    <location>
        <begin position="196"/>
        <end position="205"/>
    </location>
</feature>
<feature type="compositionally biased region" description="Pro residues" evidence="3">
    <location>
        <begin position="214"/>
        <end position="223"/>
    </location>
</feature>
<feature type="compositionally biased region" description="Low complexity" evidence="3">
    <location>
        <begin position="229"/>
        <end position="245"/>
    </location>
</feature>
<feature type="compositionally biased region" description="Pro residues" evidence="3">
    <location>
        <begin position="246"/>
        <end position="262"/>
    </location>
</feature>
<feature type="compositionally biased region" description="Low complexity" evidence="3">
    <location>
        <begin position="273"/>
        <end position="307"/>
    </location>
</feature>
<feature type="compositionally biased region" description="Low complexity" evidence="3">
    <location>
        <begin position="323"/>
        <end position="334"/>
    </location>
</feature>
<feature type="active site" description="Proton acceptor" evidence="2">
    <location>
        <position position="496"/>
    </location>
</feature>
<feature type="binding site" evidence="2">
    <location>
        <begin position="382"/>
        <end position="390"/>
    </location>
    <ligand>
        <name>ATP</name>
        <dbReference type="ChEBI" id="CHEBI:30616"/>
    </ligand>
</feature>
<feature type="binding site" evidence="2">
    <location>
        <position position="405"/>
    </location>
    <ligand>
        <name>ATP</name>
        <dbReference type="ChEBI" id="CHEBI:30616"/>
    </ligand>
</feature>
<feature type="splice variant" id="VSP_057793" description="In isoform d." evidence="9">
    <location>
        <begin position="1"/>
        <end position="377"/>
    </location>
</feature>
<feature type="splice variant" id="VSP_057794" description="In isoform b." evidence="9">
    <original>MSTSKSSKVRIRNFIGRIFSPSDKDKDRDDEMKPSSSAMDISQPYNTVHRVHVGYDGQKFSGLPQPWMDILLRDISLADQKKDPNAVVTALKFYAQSMKENEKTKFMTTNSVFTNSDDDDVDVQLTGQVTEHLRNLQCSNGSATSPSTSVSASSSSARPLTNGNNHLSTASSTDTSLSLSERNNVPSPAPVPYSESAPQLKTFTGETPKLHPRSPFPPQPPVLPQRSKTASAVATTTTNPTTSNGAPPPVPGSKGPPVPPKPS</original>
    <variation>MFQNSPMMYDWWNDTTKPKHQQPTLNVLSPWGAYFNHIGNELL</variation>
    <location>
        <begin position="1"/>
        <end position="263"/>
    </location>
</feature>
<feature type="splice variant" id="VSP_057795" description="In isoform a." evidence="9">
    <original>SHLKIASSTVSSGCSSPQQYSSARSVGNSLSNGSVVSTTSSDGDVQLSN</original>
    <variation>S</variation>
    <location>
        <begin position="263"/>
        <end position="311"/>
    </location>
</feature>
<feature type="mutagenesis site" description="In cy2; probable loss of activity. Partial sensitivity to the heavy metal Cu(2+). During development, DD and DV motoneuron axons fail to reach the dorsal cord. Axonal growth is not affected. Mild defect in locomotion. In pak-1 mutants, causes lateral displacement of the VD neuron. In mig-10 mutants, failure of HSN axons to migrate to the ventral nerve cord." evidence="4 5 7">
    <original>G</original>
    <variation>E</variation>
    <location>
        <position position="388"/>
    </location>
</feature>
<feature type="mutagenesis site" description="Probable loss of activity. Partial sensitivity to the heavy metal Cu(2+) and loss of kgb-1 phosphorylation upon Cu(2+) treatment. Does not affect interaction with mlk-1." evidence="7">
    <original>K</original>
    <variation>R</variation>
    <location>
        <position position="405"/>
    </location>
</feature>
<organism evidence="12">
    <name type="scientific">Caenorhabditis elegans</name>
    <dbReference type="NCBI Taxonomy" id="6239"/>
    <lineage>
        <taxon>Eukaryota</taxon>
        <taxon>Metazoa</taxon>
        <taxon>Ecdysozoa</taxon>
        <taxon>Nematoda</taxon>
        <taxon>Chromadorea</taxon>
        <taxon>Rhabditida</taxon>
        <taxon>Rhabditina</taxon>
        <taxon>Rhabditomorpha</taxon>
        <taxon>Rhabditoidea</taxon>
        <taxon>Rhabditidae</taxon>
        <taxon>Peloderinae</taxon>
        <taxon>Caenorhabditis</taxon>
    </lineage>
</organism>
<accession>G5EGQ3</accession>
<accession>G5EGS0</accession>
<accession>H2KMK1</accession>
<accession>Q9XWL8</accession>
<keyword id="KW-0025">Alternative splicing</keyword>
<keyword id="KW-0067">ATP-binding</keyword>
<keyword id="KW-0966">Cell projection</keyword>
<keyword id="KW-0963">Cytoplasm</keyword>
<keyword id="KW-0221">Differentiation</keyword>
<keyword id="KW-0334">Gonadal differentiation</keyword>
<keyword id="KW-0418">Kinase</keyword>
<keyword id="KW-0460">Magnesium</keyword>
<keyword id="KW-0479">Metal-binding</keyword>
<keyword id="KW-0524">Neurogenesis</keyword>
<keyword id="KW-0547">Nucleotide-binding</keyword>
<keyword id="KW-1185">Reference proteome</keyword>
<keyword id="KW-0723">Serine/threonine-protein kinase</keyword>
<keyword id="KW-0346">Stress response</keyword>
<keyword id="KW-0808">Transferase</keyword>
<reference evidence="11" key="1">
    <citation type="journal article" date="2006" name="Development">
        <title>The Caenorhabditis elegans P21-activated kinases are differentially required for UNC-6/netrin-mediated commissural motor axon guidance.</title>
        <authorList>
            <person name="Lucanic M."/>
            <person name="Kiley M."/>
            <person name="Ashcroft N."/>
            <person name="L'Etoile N."/>
            <person name="Cheng H.J."/>
        </authorList>
    </citation>
    <scope>NUCLEOTIDE SEQUENCE [MRNA] (ISOFORM A)</scope>
    <scope>FUNCTION</scope>
    <scope>SUBCELLULAR LOCATION</scope>
    <scope>DEVELOPMENTAL STAGE</scope>
    <scope>DISRUPTION PHENOTYPE</scope>
    <scope>MUTAGENESIS OF GLY-388</scope>
</reference>
<reference evidence="12" key="2">
    <citation type="journal article" date="1998" name="Science">
        <title>Genome sequence of the nematode C. elegans: a platform for investigating biology.</title>
        <authorList>
            <consortium name="The C. elegans sequencing consortium"/>
        </authorList>
    </citation>
    <scope>NUCLEOTIDE SEQUENCE [LARGE SCALE GENOMIC DNA]</scope>
    <source>
        <strain evidence="12">Bristol N2</strain>
    </source>
</reference>
<reference evidence="9" key="3">
    <citation type="journal article" date="2008" name="Curr. Biol.">
        <title>CED-10/Rac1 mediates axon guidance by regulating the asymmetric distribution of MIG-10/lamellipodin.</title>
        <authorList>
            <person name="Quinn C.C."/>
            <person name="Pfeil D.S."/>
            <person name="Wadsworth W.G."/>
        </authorList>
    </citation>
    <scope>FUNCTION</scope>
    <scope>MUTAGENESIS OF GLY-388</scope>
</reference>
<reference evidence="9" key="4">
    <citation type="journal article" date="2008" name="PLoS Genet.">
        <title>A RAC/CDC-42-independent GIT/PIX/PAK signaling pathway mediates cell migration in C. elegans.</title>
        <authorList>
            <person name="Lucanic M."/>
            <person name="Cheng H.J."/>
        </authorList>
    </citation>
    <scope>FUNCTION</scope>
    <scope>SUBCELLULAR LOCATION</scope>
</reference>
<reference evidence="9" key="5">
    <citation type="journal article" date="2010" name="Mol. Cell. Biol.">
        <title>The Caenorhabditis elegans Ste20-related kinase and Rac-type small GTPase regulate the c-Jun N-terminal kinase signaling pathway mediating the stress response.</title>
        <authorList>
            <person name="Fujiki K."/>
            <person name="Mizuno T."/>
            <person name="Hisamoto N."/>
            <person name="Matsumoto K."/>
        </authorList>
    </citation>
    <scope>FUNCTION</scope>
    <scope>CATALYTIC ACTIVITY</scope>
    <scope>COFACTOR</scope>
    <scope>INTERACTION WITH MLK-1 AND MIG-2</scope>
    <scope>DISRUPTION PHENOTYPE</scope>
    <scope>MUTAGENESIS OF GLY-388 AND LYS-405</scope>
</reference>
<reference evidence="9" key="6">
    <citation type="journal article" date="2013" name="G3 (Bethesda)">
        <title>Redundant canonical and noncanonical Caenorhabditis elegans p21-activated kinase signaling governs distal tip cell migrations.</title>
        <authorList>
            <person name="Peters E.C."/>
            <person name="Gossett A.J."/>
            <person name="Goldstein B."/>
            <person name="Der C.J."/>
            <person name="Reiner D.J."/>
        </authorList>
    </citation>
    <scope>FUNCTION</scope>
    <scope>DISRUPTION PHENOTYPE</scope>
</reference>
<proteinExistence type="evidence at protein level"/>
<sequence>MSTSKSSKVRIRNFIGRIFSPSDKDKDRDDEMKPSSSAMDISQPYNTVHRVHVGYDGQKFSGLPQPWMDILLRDISLADQKKDPNAVVTALKFYAQSMKENEKTKFMTTNSVFTNSDDDDVDVQLTGQVTEHLRNLQCSNGSATSPSTSVSASSSSARPLTNGNNHLSTASSTDTSLSLSERNNVPSPAPVPYSESAPQLKTFTGETPKLHPRSPFPPQPPVLPQRSKTASAVATTTTNPTTSNGAPPPVPGSKGPPVPPKPSHLKIASSTVSSGCSSPQQYSSARSVGNSLSNGSVVSTTSSDGDVQLSNKENSNDKSVGDKNGNTTTNKTTVEPPPPEEPPVRVRASHREKLSDSEVLNQLREIVNPSNPLGKYEMKKQIGVGASGTVFVANVAGSTDVVAVKRMAFKTQPKKEMLLTEIKVMKQYRHPNLVNYIESYLVDADDLWVVMDYLEGGNLTDVVVKTELDEGQIAAVLQECLKALHFLHRHSIVHRDIKSDNVLLGMNGEVKLTDMGFCAQIQPGSKRDTVVGTPYWMSPEILNKKQYNYKVDIWSLGIMALEMIDGEPPYLRETPLKAIYLIAQNGKPEIKQRDRLSSEFNNFLDKCLVVDPDQRADTTELLAHPFLKKAKPLSSLIPYIRAVREK</sequence>